<proteinExistence type="evidence at protein level"/>
<comment type="function">
    <text evidence="3">Catalyzes an amino-pyrimidine hydrolysis reaction at the C5' of the pyrimidine moiety of thiamine compounds, a reaction that is part of a thiamine salvage pathway. Thus, catalyzes the conversion of 4-amino-5-aminomethyl-2-methylpyrimidine to 4-amino-5-hydroxymethyl-2-methylpyrimidine (HMP). To a lesser extent, is also able to catalyze the hydrolytic cleavage of thiamine; however, this thiaminase activity is unlikely to be physiologically relevant. Therefore, is involved in the regeneration of the thiamine pyrimidine from thiamine degraded products present in the environment, rather than in thiamine degradation.</text>
</comment>
<comment type="catalytic activity">
    <reaction evidence="3">
        <text>4-amino-5-aminomethyl-2-methylpyrimidine + H2O = 4-amino-5-hydroxymethyl-2-methylpyrimidine + NH4(+)</text>
        <dbReference type="Rhea" id="RHEA:31799"/>
        <dbReference type="ChEBI" id="CHEBI:15377"/>
        <dbReference type="ChEBI" id="CHEBI:16892"/>
        <dbReference type="ChEBI" id="CHEBI:28938"/>
        <dbReference type="ChEBI" id="CHEBI:63416"/>
        <dbReference type="EC" id="3.5.99.2"/>
    </reaction>
</comment>
<comment type="catalytic activity">
    <reaction evidence="3">
        <text>thiamine + H2O = 5-(2-hydroxyethyl)-4-methylthiazole + 4-amino-5-hydroxymethyl-2-methylpyrimidine + H(+)</text>
        <dbReference type="Rhea" id="RHEA:17509"/>
        <dbReference type="ChEBI" id="CHEBI:15377"/>
        <dbReference type="ChEBI" id="CHEBI:15378"/>
        <dbReference type="ChEBI" id="CHEBI:16892"/>
        <dbReference type="ChEBI" id="CHEBI:17957"/>
        <dbReference type="ChEBI" id="CHEBI:18385"/>
        <dbReference type="EC" id="3.5.99.2"/>
    </reaction>
</comment>
<comment type="biophysicochemical properties">
    <kinetics>
        <KM evidence="3">11.8 uM for 4-amino-5-aminomethyl-2-methylpyrimidine</KM>
        <text evidence="3">kcat is 22.0 min(-1) for the hydrolysis of 4-amino-5-aminomethyl-2-methylpyrimidine. Catalyzes the hydrolysis of aminopyrimidine 100 times faster than the hydrolysis of thiamine.</text>
    </kinetics>
</comment>
<comment type="pathway">
    <text evidence="3">Cofactor biosynthesis; thiamine diphosphate biosynthesis.</text>
</comment>
<comment type="subunit">
    <text evidence="7">Homotetramer.</text>
</comment>
<comment type="induction">
    <text evidence="1">Strongly repressed by thiamine.</text>
</comment>
<comment type="disruption phenotype">
    <text evidence="3 5">Inactivation of this gene causes a delay in sporulation, but does not affect cell growth and the production of extracellular enzymes (PubMed:1898926). The deletion mutant does not require a hydroxypyrimidine source as it is able to biosynthesize it using ThiA; the tenA/thiA double mutant, however, is hydroxypyrimidine-requiring and is unable to salvage the pyrimidine from formylaminopyrimidine, aminopyrimidine, or base-degraded thiamine (PubMed:17618314).</text>
</comment>
<comment type="similarity">
    <text evidence="11">Belongs to the TenA family.</text>
</comment>
<comment type="caution">
    <text evidence="10 11">Was originally described as a regulatory protein involved in the regulation of the production of extracellular enzymes.</text>
</comment>
<gene>
    <name evidence="10" type="primary">tenA</name>
    <name type="ordered locus">BSU11650</name>
</gene>
<accession>P25052</accession>
<organism>
    <name type="scientific">Bacillus subtilis (strain 168)</name>
    <dbReference type="NCBI Taxonomy" id="224308"/>
    <lineage>
        <taxon>Bacteria</taxon>
        <taxon>Bacillati</taxon>
        <taxon>Bacillota</taxon>
        <taxon>Bacilli</taxon>
        <taxon>Bacillales</taxon>
        <taxon>Bacillaceae</taxon>
        <taxon>Bacillus</taxon>
    </lineage>
</organism>
<keyword id="KW-0002">3D-structure</keyword>
<keyword id="KW-0378">Hydrolase</keyword>
<keyword id="KW-1185">Reference proteome</keyword>
<keyword id="KW-0784">Thiamine biosynthesis</keyword>
<feature type="chain" id="PRO_0000192046" description="Aminopyrimidine aminohydrolase">
    <location>
        <begin position="1"/>
        <end position="236"/>
    </location>
</feature>
<feature type="active site" description="Nucleophile" evidence="9">
    <location>
        <position position="135"/>
    </location>
</feature>
<feature type="active site" description="Proton donor" evidence="9">
    <location>
        <position position="205"/>
    </location>
</feature>
<feature type="binding site" evidence="2 6">
    <location>
        <position position="44"/>
    </location>
    <ligand>
        <name>substrate</name>
    </ligand>
</feature>
<feature type="binding site" evidence="2 6">
    <location>
        <position position="139"/>
    </location>
    <ligand>
        <name>substrate</name>
    </ligand>
</feature>
<feature type="binding site" evidence="2 6">
    <location>
        <position position="163"/>
    </location>
    <ligand>
        <name>substrate</name>
    </ligand>
</feature>
<feature type="site" description="Increases nucleophilicity of active site Cys" evidence="9">
    <location>
        <position position="47"/>
    </location>
</feature>
<feature type="mutagenesis site" description="6300-fold reduction in catalytic efficiency." evidence="4">
    <original>D</original>
    <variation>A</variation>
    <location>
        <position position="44"/>
    </location>
</feature>
<feature type="mutagenesis site" description="About 2-fold decrease in substrate affinity and 30-fold reduction in catalytic activity." evidence="4">
    <original>Y</original>
    <variation>F</variation>
    <location>
        <position position="47"/>
    </location>
</feature>
<feature type="mutagenesis site" description="About 2-fold decrease in substrate affinity and 70-fold reduction in catalytic activity." evidence="4">
    <original>Y</original>
    <variation>F</variation>
    <location>
        <position position="112"/>
    </location>
</feature>
<feature type="mutagenesis site" description="Loss of catalytic activity." evidence="4">
    <original>C</original>
    <variation>A</variation>
    <location>
        <position position="135"/>
    </location>
</feature>
<feature type="mutagenesis site" description="2000-fold reduction in catalytic efficiency." evidence="4">
    <original>E</original>
    <variation>A</variation>
    <location>
        <position position="205"/>
    </location>
</feature>
<feature type="helix" evidence="12">
    <location>
        <begin position="3"/>
        <end position="10"/>
    </location>
</feature>
<feature type="helix" evidence="12">
    <location>
        <begin position="12"/>
        <end position="19"/>
    </location>
</feature>
<feature type="helix" evidence="12">
    <location>
        <begin position="22"/>
        <end position="29"/>
    </location>
</feature>
<feature type="helix" evidence="12">
    <location>
        <begin position="34"/>
        <end position="61"/>
    </location>
</feature>
<feature type="helix" evidence="12">
    <location>
        <begin position="65"/>
        <end position="93"/>
    </location>
</feature>
<feature type="helix" evidence="12">
    <location>
        <begin position="97"/>
        <end position="101"/>
    </location>
</feature>
<feature type="helix" evidence="12">
    <location>
        <begin position="107"/>
        <end position="120"/>
    </location>
</feature>
<feature type="turn" evidence="12">
    <location>
        <begin position="121"/>
        <end position="123"/>
    </location>
</feature>
<feature type="helix" evidence="12">
    <location>
        <begin position="125"/>
        <end position="146"/>
    </location>
</feature>
<feature type="helix" evidence="12">
    <location>
        <begin position="154"/>
        <end position="163"/>
    </location>
</feature>
<feature type="helix" evidence="12">
    <location>
        <begin position="166"/>
        <end position="184"/>
    </location>
</feature>
<feature type="helix" evidence="12">
    <location>
        <begin position="188"/>
        <end position="213"/>
    </location>
</feature>
<feature type="helix" evidence="12">
    <location>
        <begin position="221"/>
        <end position="225"/>
    </location>
</feature>
<sequence>MKFSEECRSAAAEWWEGSFVHPFVQGIGDGTLPIDRFKYYVLQDSYYLTHFAKVQSFGAAYAKDLYTTGRMASHAQGTYEAEMALHREFAELLEISEEERKAFKPSPTAYSYTSHMYRSVLSGNFAEILAALLPCYWLYYEVGEKLLHCDPGHPIYQKWIGTYGGDWFRQQVEEQINRFDELAENSTEEVRAKMKENFVISSYYEYQFWGMAYRKEGWSDSAIKEVEECGASRHNG</sequence>
<reference key="1">
    <citation type="journal article" date="1991" name="J. Bacteriol.">
        <title>Cloning and characterization of a pair of novel genes that regulate production of extracellular enzymes in Bacillus subtilis.</title>
        <authorList>
            <person name="Pang A.S.-H."/>
            <person name="Nathoo S."/>
            <person name="Wong S.-L."/>
        </authorList>
    </citation>
    <scope>NUCLEOTIDE SEQUENCE [GENOMIC DNA]</scope>
    <scope>DISRUPTION PHENOTYPE</scope>
</reference>
<reference key="2">
    <citation type="journal article" date="1997" name="Nature">
        <title>The complete genome sequence of the Gram-positive bacterium Bacillus subtilis.</title>
        <authorList>
            <person name="Kunst F."/>
            <person name="Ogasawara N."/>
            <person name="Moszer I."/>
            <person name="Albertini A.M."/>
            <person name="Alloni G."/>
            <person name="Azevedo V."/>
            <person name="Bertero M.G."/>
            <person name="Bessieres P."/>
            <person name="Bolotin A."/>
            <person name="Borchert S."/>
            <person name="Borriss R."/>
            <person name="Boursier L."/>
            <person name="Brans A."/>
            <person name="Braun M."/>
            <person name="Brignell S.C."/>
            <person name="Bron S."/>
            <person name="Brouillet S."/>
            <person name="Bruschi C.V."/>
            <person name="Caldwell B."/>
            <person name="Capuano V."/>
            <person name="Carter N.M."/>
            <person name="Choi S.-K."/>
            <person name="Codani J.-J."/>
            <person name="Connerton I.F."/>
            <person name="Cummings N.J."/>
            <person name="Daniel R.A."/>
            <person name="Denizot F."/>
            <person name="Devine K.M."/>
            <person name="Duesterhoeft A."/>
            <person name="Ehrlich S.D."/>
            <person name="Emmerson P.T."/>
            <person name="Entian K.-D."/>
            <person name="Errington J."/>
            <person name="Fabret C."/>
            <person name="Ferrari E."/>
            <person name="Foulger D."/>
            <person name="Fritz C."/>
            <person name="Fujita M."/>
            <person name="Fujita Y."/>
            <person name="Fuma S."/>
            <person name="Galizzi A."/>
            <person name="Galleron N."/>
            <person name="Ghim S.-Y."/>
            <person name="Glaser P."/>
            <person name="Goffeau A."/>
            <person name="Golightly E.J."/>
            <person name="Grandi G."/>
            <person name="Guiseppi G."/>
            <person name="Guy B.J."/>
            <person name="Haga K."/>
            <person name="Haiech J."/>
            <person name="Harwood C.R."/>
            <person name="Henaut A."/>
            <person name="Hilbert H."/>
            <person name="Holsappel S."/>
            <person name="Hosono S."/>
            <person name="Hullo M.-F."/>
            <person name="Itaya M."/>
            <person name="Jones L.-M."/>
            <person name="Joris B."/>
            <person name="Karamata D."/>
            <person name="Kasahara Y."/>
            <person name="Klaerr-Blanchard M."/>
            <person name="Klein C."/>
            <person name="Kobayashi Y."/>
            <person name="Koetter P."/>
            <person name="Koningstein G."/>
            <person name="Krogh S."/>
            <person name="Kumano M."/>
            <person name="Kurita K."/>
            <person name="Lapidus A."/>
            <person name="Lardinois S."/>
            <person name="Lauber J."/>
            <person name="Lazarevic V."/>
            <person name="Lee S.-M."/>
            <person name="Levine A."/>
            <person name="Liu H."/>
            <person name="Masuda S."/>
            <person name="Mauel C."/>
            <person name="Medigue C."/>
            <person name="Medina N."/>
            <person name="Mellado R.P."/>
            <person name="Mizuno M."/>
            <person name="Moestl D."/>
            <person name="Nakai S."/>
            <person name="Noback M."/>
            <person name="Noone D."/>
            <person name="O'Reilly M."/>
            <person name="Ogawa K."/>
            <person name="Ogiwara A."/>
            <person name="Oudega B."/>
            <person name="Park S.-H."/>
            <person name="Parro V."/>
            <person name="Pohl T.M."/>
            <person name="Portetelle D."/>
            <person name="Porwollik S."/>
            <person name="Prescott A.M."/>
            <person name="Presecan E."/>
            <person name="Pujic P."/>
            <person name="Purnelle B."/>
            <person name="Rapoport G."/>
            <person name="Rey M."/>
            <person name="Reynolds S."/>
            <person name="Rieger M."/>
            <person name="Rivolta C."/>
            <person name="Rocha E."/>
            <person name="Roche B."/>
            <person name="Rose M."/>
            <person name="Sadaie Y."/>
            <person name="Sato T."/>
            <person name="Scanlan E."/>
            <person name="Schleich S."/>
            <person name="Schroeter R."/>
            <person name="Scoffone F."/>
            <person name="Sekiguchi J."/>
            <person name="Sekowska A."/>
            <person name="Seror S.J."/>
            <person name="Serror P."/>
            <person name="Shin B.-S."/>
            <person name="Soldo B."/>
            <person name="Sorokin A."/>
            <person name="Tacconi E."/>
            <person name="Takagi T."/>
            <person name="Takahashi H."/>
            <person name="Takemaru K."/>
            <person name="Takeuchi M."/>
            <person name="Tamakoshi A."/>
            <person name="Tanaka T."/>
            <person name="Terpstra P."/>
            <person name="Tognoni A."/>
            <person name="Tosato V."/>
            <person name="Uchiyama S."/>
            <person name="Vandenbol M."/>
            <person name="Vannier F."/>
            <person name="Vassarotti A."/>
            <person name="Viari A."/>
            <person name="Wambutt R."/>
            <person name="Wedler E."/>
            <person name="Wedler H."/>
            <person name="Weitzenegger T."/>
            <person name="Winters P."/>
            <person name="Wipat A."/>
            <person name="Yamamoto H."/>
            <person name="Yamane K."/>
            <person name="Yasumoto K."/>
            <person name="Yata K."/>
            <person name="Yoshida K."/>
            <person name="Yoshikawa H.-F."/>
            <person name="Zumstein E."/>
            <person name="Yoshikawa H."/>
            <person name="Danchin A."/>
        </authorList>
    </citation>
    <scope>NUCLEOTIDE SEQUENCE [LARGE SCALE GENOMIC DNA]</scope>
    <source>
        <strain>168</strain>
    </source>
</reference>
<reference key="3">
    <citation type="journal article" date="2001" name="J. Bacteriol.">
        <title>RNA expression analysis using an antisense Bacillus subtilis genome array.</title>
        <authorList>
            <person name="Lee J.M."/>
            <person name="Zhang S."/>
            <person name="Saha S."/>
            <person name="Santa Anna S."/>
            <person name="Jiang C."/>
            <person name="Perkins J."/>
        </authorList>
    </citation>
    <scope>INDUCTION</scope>
</reference>
<reference key="4">
    <citation type="journal article" date="2007" name="Nat. Chem. Biol.">
        <title>A new thiamin salvage pathway.</title>
        <authorList>
            <person name="Jenkins A.H."/>
            <person name="Schyns G."/>
            <person name="Potot S."/>
            <person name="Sun G."/>
            <person name="Begley T.P."/>
        </authorList>
    </citation>
    <scope>FUNCTION</scope>
    <scope>CATALYTIC ACTIVITY</scope>
    <scope>BIOPHYSICOCHEMICAL PROPERTIES</scope>
    <scope>PATHWAY</scope>
    <scope>DISRUPTION PHENOTYPE</scope>
</reference>
<reference key="5">
    <citation type="submission" date="2004-06" db="PDB data bank">
        <title>Crystal structure of THI-4 protein from Bacillus subtilis.</title>
        <authorList>
            <person name="Rajan S.S."/>
            <person name="Shuvalova L."/>
            <person name="Yang X."/>
            <person name="Hussar C."/>
            <person name="Collart F."/>
            <person name="Anderson W.F."/>
        </authorList>
    </citation>
    <scope>X-RAY CRYSTALLOGRAPHY (2.40 ANGSTROMS) IN COMPLEX WITH HMP PRODUCT</scope>
</reference>
<reference key="6">
    <citation type="submission" date="2004-07" db="PDB data bank">
        <title>Crystal structure of transcriptional activator tenA from Bacillus subtilis.</title>
        <authorList>
            <person name="Eswaramoorthy S."/>
            <person name="Swaminathan S."/>
        </authorList>
    </citation>
    <scope>X-RAY CRYSTALLOGRAPHY (2.54 ANGSTROMS) OF 2-236</scope>
</reference>
<reference key="7">
    <citation type="journal article" date="2005" name="Biochemistry">
        <title>Structural characterization of the regulatory proteins TenA and TenI from Bacillus subtilis and identification of TenA as a thiaminase II.</title>
        <authorList>
            <person name="Toms A.V."/>
            <person name="Haas A.L."/>
            <person name="Park J.-H."/>
            <person name="Begley T.P."/>
            <person name="Ealick S.E."/>
        </authorList>
    </citation>
    <scope>X-RAY CRYSTALLOGRAPHY (2.5 ANGSTROMS) OF APOPROTEIN AND IN COMPLEX WITH HMP PRODUCT</scope>
</reference>
<reference key="8">
    <citation type="journal article" date="2008" name="Bioorg. Chem.">
        <title>Mutagenesis studies on TenA: a thiamin salvage enzyme from Bacillus subtilis.</title>
        <authorList>
            <person name="Jenkins A.L."/>
            <person name="Zhang Y."/>
            <person name="Ealick S.E."/>
            <person name="Begley T.P."/>
        </authorList>
    </citation>
    <scope>X-RAY CRYSTALLOGRAPHY (2.20 ANGSTROMS) OF MUTANT PHE-112 IN COMPLEX WITH SUBSTRATE ANALOG</scope>
    <scope>REACTION MECHANISM</scope>
    <scope>ACTIVE SITE</scope>
    <scope>MUTAGENESIS OF ASP-44; TYR-47; TYR-112; CYS-135 AND GLU-205</scope>
</reference>
<name>TENA_BACSU</name>
<evidence type="ECO:0000269" key="1">
    <source>
    </source>
</evidence>
<evidence type="ECO:0000269" key="2">
    <source>
    </source>
</evidence>
<evidence type="ECO:0000269" key="3">
    <source>
    </source>
</evidence>
<evidence type="ECO:0000269" key="4">
    <source>
    </source>
</evidence>
<evidence type="ECO:0000269" key="5">
    <source>
    </source>
</evidence>
<evidence type="ECO:0000269" key="6">
    <source ref="5"/>
</evidence>
<evidence type="ECO:0000303" key="7">
    <source>
    </source>
</evidence>
<evidence type="ECO:0000303" key="8">
    <source>
    </source>
</evidence>
<evidence type="ECO:0000303" key="9">
    <source>
    </source>
</evidence>
<evidence type="ECO:0000303" key="10">
    <source>
    </source>
</evidence>
<evidence type="ECO:0000305" key="11"/>
<evidence type="ECO:0007829" key="12">
    <source>
        <dbReference type="PDB" id="2QCX"/>
    </source>
</evidence>
<dbReference type="EC" id="3.5.99.2" evidence="3"/>
<dbReference type="EMBL" id="M73546">
    <property type="protein sequence ID" value="AAA22848.1"/>
    <property type="molecule type" value="Genomic_DNA"/>
</dbReference>
<dbReference type="EMBL" id="AL009126">
    <property type="protein sequence ID" value="CAB13022.1"/>
    <property type="molecule type" value="Genomic_DNA"/>
</dbReference>
<dbReference type="PIR" id="A39184">
    <property type="entry name" value="XMBSTA"/>
</dbReference>
<dbReference type="RefSeq" id="NP_389047.1">
    <property type="nucleotide sequence ID" value="NC_000964.3"/>
</dbReference>
<dbReference type="RefSeq" id="WP_003232909.1">
    <property type="nucleotide sequence ID" value="NZ_OZ025638.1"/>
</dbReference>
<dbReference type="PDB" id="1TO9">
    <property type="method" value="X-ray"/>
    <property type="resolution" value="2.40 A"/>
    <property type="chains" value="A/B=1-236"/>
</dbReference>
<dbReference type="PDB" id="1TYH">
    <property type="method" value="X-ray"/>
    <property type="resolution" value="2.54 A"/>
    <property type="chains" value="A/B/D/E=2-236"/>
</dbReference>
<dbReference type="PDB" id="1YAF">
    <property type="method" value="X-ray"/>
    <property type="resolution" value="2.60 A"/>
    <property type="chains" value="A/B/C/D=1-236"/>
</dbReference>
<dbReference type="PDB" id="1YAK">
    <property type="method" value="X-ray"/>
    <property type="resolution" value="2.50 A"/>
    <property type="chains" value="A/B/C/D=1-236"/>
</dbReference>
<dbReference type="PDB" id="2QCX">
    <property type="method" value="X-ray"/>
    <property type="resolution" value="2.20 A"/>
    <property type="chains" value="A/B=1-236"/>
</dbReference>
<dbReference type="PDBsum" id="1TO9"/>
<dbReference type="PDBsum" id="1TYH"/>
<dbReference type="PDBsum" id="1YAF"/>
<dbReference type="PDBsum" id="1YAK"/>
<dbReference type="PDBsum" id="2QCX"/>
<dbReference type="SMR" id="P25052"/>
<dbReference type="FunCoup" id="P25052">
    <property type="interactions" value="158"/>
</dbReference>
<dbReference type="IntAct" id="P25052">
    <property type="interactions" value="1"/>
</dbReference>
<dbReference type="MINT" id="P25052"/>
<dbReference type="STRING" id="224308.BSU11650"/>
<dbReference type="DrugBank" id="DB02022">
    <property type="generic name" value="4-Amino-5-Hydroxymethyl-2-Methylpyrimidine"/>
</dbReference>
<dbReference type="PaxDb" id="224308-BSU11650"/>
<dbReference type="DNASU" id="939807"/>
<dbReference type="EnsemblBacteria" id="CAB13022">
    <property type="protein sequence ID" value="CAB13022"/>
    <property type="gene ID" value="BSU_11650"/>
</dbReference>
<dbReference type="GeneID" id="939807"/>
<dbReference type="KEGG" id="bsu:BSU11650"/>
<dbReference type="PATRIC" id="fig|224308.179.peg.1254"/>
<dbReference type="eggNOG" id="COG0819">
    <property type="taxonomic scope" value="Bacteria"/>
</dbReference>
<dbReference type="InParanoid" id="P25052"/>
<dbReference type="OrthoDB" id="34166at2"/>
<dbReference type="PhylomeDB" id="P25052"/>
<dbReference type="BioCyc" id="BSUB:BSU11650-MONOMER"/>
<dbReference type="BioCyc" id="MetaCyc:BSU11650-MONOMER"/>
<dbReference type="BRENDA" id="3.5.99.2">
    <property type="organism ID" value="658"/>
</dbReference>
<dbReference type="UniPathway" id="UPA00060"/>
<dbReference type="EvolutionaryTrace" id="P25052"/>
<dbReference type="Proteomes" id="UP000001570">
    <property type="component" value="Chromosome"/>
</dbReference>
<dbReference type="GO" id="GO:0005829">
    <property type="term" value="C:cytosol"/>
    <property type="evidence" value="ECO:0000318"/>
    <property type="project" value="GO_Central"/>
</dbReference>
<dbReference type="GO" id="GO:0050334">
    <property type="term" value="F:thiaminase activity"/>
    <property type="evidence" value="ECO:0007669"/>
    <property type="project" value="UniProtKB-EC"/>
</dbReference>
<dbReference type="GO" id="GO:0009228">
    <property type="term" value="P:thiamine biosynthetic process"/>
    <property type="evidence" value="ECO:0007669"/>
    <property type="project" value="UniProtKB-KW"/>
</dbReference>
<dbReference type="GO" id="GO:0009229">
    <property type="term" value="P:thiamine diphosphate biosynthetic process"/>
    <property type="evidence" value="ECO:0007669"/>
    <property type="project" value="UniProtKB-UniPathway"/>
</dbReference>
<dbReference type="CDD" id="cd19364">
    <property type="entry name" value="TenA_C_BsTenA-like"/>
    <property type="match status" value="1"/>
</dbReference>
<dbReference type="Gene3D" id="1.20.910.10">
    <property type="entry name" value="Heme oxygenase-like"/>
    <property type="match status" value="1"/>
</dbReference>
<dbReference type="InterPro" id="IPR016084">
    <property type="entry name" value="Haem_Oase-like_multi-hlx"/>
</dbReference>
<dbReference type="InterPro" id="IPR004305">
    <property type="entry name" value="Thiaminase-2/PQQC"/>
</dbReference>
<dbReference type="InterPro" id="IPR027574">
    <property type="entry name" value="Thiaminase_II"/>
</dbReference>
<dbReference type="InterPro" id="IPR050967">
    <property type="entry name" value="Thiamine_Salvage_TenA"/>
</dbReference>
<dbReference type="NCBIfam" id="TIGR04306">
    <property type="entry name" value="salvage_TenA"/>
    <property type="match status" value="1"/>
</dbReference>
<dbReference type="PANTHER" id="PTHR43198">
    <property type="entry name" value="BIFUNCTIONAL TH2 PROTEIN"/>
    <property type="match status" value="1"/>
</dbReference>
<dbReference type="PANTHER" id="PTHR43198:SF2">
    <property type="entry name" value="SI:CH1073-67J19.1-RELATED"/>
    <property type="match status" value="1"/>
</dbReference>
<dbReference type="Pfam" id="PF03070">
    <property type="entry name" value="TENA_THI-4"/>
    <property type="match status" value="1"/>
</dbReference>
<dbReference type="SUPFAM" id="SSF48613">
    <property type="entry name" value="Heme oxygenase-like"/>
    <property type="match status" value="1"/>
</dbReference>
<protein>
    <recommendedName>
        <fullName evidence="8">Aminopyrimidine aminohydrolase</fullName>
        <ecNumber evidence="3">3.5.99.2</ecNumber>
    </recommendedName>
    <alternativeName>
        <fullName evidence="8">4-amino-5-aminomethyl-2-methylpyrimidine hydrolase</fullName>
    </alternativeName>
    <alternativeName>
        <fullName evidence="7">Thiaminase II</fullName>
    </alternativeName>
</protein>